<protein>
    <recommendedName>
        <fullName evidence="1">Large ribosomal subunit protein bL28</fullName>
    </recommendedName>
    <alternativeName>
        <fullName evidence="2">50S ribosomal protein L28</fullName>
    </alternativeName>
</protein>
<gene>
    <name evidence="1" type="primary">rpmB</name>
    <name type="ordered locus">RT0038</name>
</gene>
<accession>Q68XW7</accession>
<dbReference type="EMBL" id="AE017197">
    <property type="protein sequence ID" value="AAU03525.1"/>
    <property type="molecule type" value="Genomic_DNA"/>
</dbReference>
<dbReference type="RefSeq" id="WP_011190512.1">
    <property type="nucleotide sequence ID" value="NC_006142.1"/>
</dbReference>
<dbReference type="SMR" id="Q68XW7"/>
<dbReference type="KEGG" id="rty:RT0038"/>
<dbReference type="eggNOG" id="COG0227">
    <property type="taxonomic scope" value="Bacteria"/>
</dbReference>
<dbReference type="HOGENOM" id="CLU_064548_4_2_5"/>
<dbReference type="OrthoDB" id="9805609at2"/>
<dbReference type="Proteomes" id="UP000000604">
    <property type="component" value="Chromosome"/>
</dbReference>
<dbReference type="GO" id="GO:1990904">
    <property type="term" value="C:ribonucleoprotein complex"/>
    <property type="evidence" value="ECO:0007669"/>
    <property type="project" value="UniProtKB-KW"/>
</dbReference>
<dbReference type="GO" id="GO:0005840">
    <property type="term" value="C:ribosome"/>
    <property type="evidence" value="ECO:0007669"/>
    <property type="project" value="UniProtKB-KW"/>
</dbReference>
<dbReference type="GO" id="GO:0003735">
    <property type="term" value="F:structural constituent of ribosome"/>
    <property type="evidence" value="ECO:0007669"/>
    <property type="project" value="InterPro"/>
</dbReference>
<dbReference type="GO" id="GO:0006412">
    <property type="term" value="P:translation"/>
    <property type="evidence" value="ECO:0007669"/>
    <property type="project" value="UniProtKB-UniRule"/>
</dbReference>
<dbReference type="Gene3D" id="2.30.170.40">
    <property type="entry name" value="Ribosomal protein L28/L24"/>
    <property type="match status" value="1"/>
</dbReference>
<dbReference type="HAMAP" id="MF_00373">
    <property type="entry name" value="Ribosomal_bL28"/>
    <property type="match status" value="1"/>
</dbReference>
<dbReference type="InterPro" id="IPR026569">
    <property type="entry name" value="Ribosomal_bL28"/>
</dbReference>
<dbReference type="InterPro" id="IPR034704">
    <property type="entry name" value="Ribosomal_bL28/bL31-like_sf"/>
</dbReference>
<dbReference type="InterPro" id="IPR001383">
    <property type="entry name" value="Ribosomal_bL28_bact-type"/>
</dbReference>
<dbReference type="InterPro" id="IPR037147">
    <property type="entry name" value="Ribosomal_bL28_sf"/>
</dbReference>
<dbReference type="NCBIfam" id="TIGR00009">
    <property type="entry name" value="L28"/>
    <property type="match status" value="1"/>
</dbReference>
<dbReference type="PANTHER" id="PTHR13528">
    <property type="entry name" value="39S RIBOSOMAL PROTEIN L28, MITOCHONDRIAL"/>
    <property type="match status" value="1"/>
</dbReference>
<dbReference type="PANTHER" id="PTHR13528:SF2">
    <property type="entry name" value="LARGE RIBOSOMAL SUBUNIT PROTEIN BL28M"/>
    <property type="match status" value="1"/>
</dbReference>
<dbReference type="Pfam" id="PF00830">
    <property type="entry name" value="Ribosomal_L28"/>
    <property type="match status" value="1"/>
</dbReference>
<dbReference type="SUPFAM" id="SSF143800">
    <property type="entry name" value="L28p-like"/>
    <property type="match status" value="1"/>
</dbReference>
<keyword id="KW-0687">Ribonucleoprotein</keyword>
<keyword id="KW-0689">Ribosomal protein</keyword>
<proteinExistence type="inferred from homology"/>
<evidence type="ECO:0000255" key="1">
    <source>
        <dbReference type="HAMAP-Rule" id="MF_00373"/>
    </source>
</evidence>
<evidence type="ECO:0000305" key="2"/>
<comment type="similarity">
    <text evidence="1">Belongs to the bacterial ribosomal protein bL28 family.</text>
</comment>
<name>RL28_RICTY</name>
<feature type="chain" id="PRO_0000178540" description="Large ribosomal subunit protein bL28">
    <location>
        <begin position="1"/>
        <end position="97"/>
    </location>
</feature>
<organism>
    <name type="scientific">Rickettsia typhi (strain ATCC VR-144 / Wilmington)</name>
    <dbReference type="NCBI Taxonomy" id="257363"/>
    <lineage>
        <taxon>Bacteria</taxon>
        <taxon>Pseudomonadati</taxon>
        <taxon>Pseudomonadota</taxon>
        <taxon>Alphaproteobacteria</taxon>
        <taxon>Rickettsiales</taxon>
        <taxon>Rickettsiaceae</taxon>
        <taxon>Rickettsieae</taxon>
        <taxon>Rickettsia</taxon>
        <taxon>typhus group</taxon>
    </lineage>
</organism>
<reference key="1">
    <citation type="journal article" date="2004" name="J. Bacteriol.">
        <title>Complete genome sequence of Rickettsia typhi and comparison with sequences of other Rickettsiae.</title>
        <authorList>
            <person name="McLeod M.P."/>
            <person name="Qin X."/>
            <person name="Karpathy S.E."/>
            <person name="Gioia J."/>
            <person name="Highlander S.K."/>
            <person name="Fox G.E."/>
            <person name="McNeill T.Z."/>
            <person name="Jiang H."/>
            <person name="Muzny D."/>
            <person name="Jacob L.S."/>
            <person name="Hawes A.C."/>
            <person name="Sodergren E."/>
            <person name="Gill R."/>
            <person name="Hume J."/>
            <person name="Morgan M."/>
            <person name="Fan G."/>
            <person name="Amin A.G."/>
            <person name="Gibbs R.A."/>
            <person name="Hong C."/>
            <person name="Yu X.-J."/>
            <person name="Walker D.H."/>
            <person name="Weinstock G.M."/>
        </authorList>
    </citation>
    <scope>NUCLEOTIDE SEQUENCE [LARGE SCALE GENOMIC DNA]</scope>
    <source>
        <strain>ATCC VR-144 / Wilmington</strain>
    </source>
</reference>
<sequence length="97" mass="11049">MSRKCELTGVSVLYGNNVSHSQRKTRRRFEPNLRSVKFRSDITDEVYRLSVNARCIRSVEKAGGFDEYILKANNDVLSSTARAIKQKIIDIKAVESL</sequence>